<proteinExistence type="inferred from homology"/>
<name>RS9_ECO27</name>
<accession>B7UJW2</accession>
<protein>
    <recommendedName>
        <fullName evidence="1">Small ribosomal subunit protein uS9</fullName>
    </recommendedName>
    <alternativeName>
        <fullName evidence="2">30S ribosomal protein S9</fullName>
    </alternativeName>
</protein>
<sequence>MAENQYYGTGRRKSSAARVFIKPGNGKIVINQRSLEQYFGRETARMVVRQPLELVDMVEKLDLYITVKGGGISGQAGAIRHGITRALMEYDESLRSELRKAGFVTRDARQVERKKVGLRKARRRPQFSKR</sequence>
<dbReference type="EMBL" id="FM180568">
    <property type="protein sequence ID" value="CAS11049.1"/>
    <property type="molecule type" value="Genomic_DNA"/>
</dbReference>
<dbReference type="RefSeq" id="WP_000829818.1">
    <property type="nucleotide sequence ID" value="NC_011601.1"/>
</dbReference>
<dbReference type="SMR" id="B7UJW2"/>
<dbReference type="GeneID" id="98390344"/>
<dbReference type="KEGG" id="ecg:E2348C_3501"/>
<dbReference type="HOGENOM" id="CLU_046483_2_1_6"/>
<dbReference type="Proteomes" id="UP000008205">
    <property type="component" value="Chromosome"/>
</dbReference>
<dbReference type="GO" id="GO:0022627">
    <property type="term" value="C:cytosolic small ribosomal subunit"/>
    <property type="evidence" value="ECO:0007669"/>
    <property type="project" value="TreeGrafter"/>
</dbReference>
<dbReference type="GO" id="GO:0003723">
    <property type="term" value="F:RNA binding"/>
    <property type="evidence" value="ECO:0007669"/>
    <property type="project" value="TreeGrafter"/>
</dbReference>
<dbReference type="GO" id="GO:0003735">
    <property type="term" value="F:structural constituent of ribosome"/>
    <property type="evidence" value="ECO:0007669"/>
    <property type="project" value="InterPro"/>
</dbReference>
<dbReference type="GO" id="GO:0006412">
    <property type="term" value="P:translation"/>
    <property type="evidence" value="ECO:0007669"/>
    <property type="project" value="UniProtKB-UniRule"/>
</dbReference>
<dbReference type="FunFam" id="3.30.230.10:FF:000001">
    <property type="entry name" value="30S ribosomal protein S9"/>
    <property type="match status" value="1"/>
</dbReference>
<dbReference type="Gene3D" id="3.30.230.10">
    <property type="match status" value="1"/>
</dbReference>
<dbReference type="HAMAP" id="MF_00532_B">
    <property type="entry name" value="Ribosomal_uS9_B"/>
    <property type="match status" value="1"/>
</dbReference>
<dbReference type="InterPro" id="IPR020568">
    <property type="entry name" value="Ribosomal_Su5_D2-typ_SF"/>
</dbReference>
<dbReference type="InterPro" id="IPR000754">
    <property type="entry name" value="Ribosomal_uS9"/>
</dbReference>
<dbReference type="InterPro" id="IPR023035">
    <property type="entry name" value="Ribosomal_uS9_bac/plastid"/>
</dbReference>
<dbReference type="InterPro" id="IPR020574">
    <property type="entry name" value="Ribosomal_uS9_CS"/>
</dbReference>
<dbReference type="InterPro" id="IPR014721">
    <property type="entry name" value="Ribsml_uS5_D2-typ_fold_subgr"/>
</dbReference>
<dbReference type="NCBIfam" id="NF001099">
    <property type="entry name" value="PRK00132.1"/>
    <property type="match status" value="1"/>
</dbReference>
<dbReference type="PANTHER" id="PTHR21569">
    <property type="entry name" value="RIBOSOMAL PROTEIN S9"/>
    <property type="match status" value="1"/>
</dbReference>
<dbReference type="PANTHER" id="PTHR21569:SF1">
    <property type="entry name" value="SMALL RIBOSOMAL SUBUNIT PROTEIN US9M"/>
    <property type="match status" value="1"/>
</dbReference>
<dbReference type="Pfam" id="PF00380">
    <property type="entry name" value="Ribosomal_S9"/>
    <property type="match status" value="1"/>
</dbReference>
<dbReference type="SUPFAM" id="SSF54211">
    <property type="entry name" value="Ribosomal protein S5 domain 2-like"/>
    <property type="match status" value="1"/>
</dbReference>
<dbReference type="PROSITE" id="PS00360">
    <property type="entry name" value="RIBOSOMAL_S9"/>
    <property type="match status" value="1"/>
</dbReference>
<gene>
    <name evidence="1" type="primary">rpsI</name>
    <name type="ordered locus">E2348C_3501</name>
</gene>
<organism>
    <name type="scientific">Escherichia coli O127:H6 (strain E2348/69 / EPEC)</name>
    <dbReference type="NCBI Taxonomy" id="574521"/>
    <lineage>
        <taxon>Bacteria</taxon>
        <taxon>Pseudomonadati</taxon>
        <taxon>Pseudomonadota</taxon>
        <taxon>Gammaproteobacteria</taxon>
        <taxon>Enterobacterales</taxon>
        <taxon>Enterobacteriaceae</taxon>
        <taxon>Escherichia</taxon>
    </lineage>
</organism>
<evidence type="ECO:0000255" key="1">
    <source>
        <dbReference type="HAMAP-Rule" id="MF_00532"/>
    </source>
</evidence>
<evidence type="ECO:0000305" key="2"/>
<comment type="similarity">
    <text evidence="1">Belongs to the universal ribosomal protein uS9 family.</text>
</comment>
<keyword id="KW-1185">Reference proteome</keyword>
<keyword id="KW-0687">Ribonucleoprotein</keyword>
<keyword id="KW-0689">Ribosomal protein</keyword>
<reference key="1">
    <citation type="journal article" date="2009" name="J. Bacteriol.">
        <title>Complete genome sequence and comparative genome analysis of enteropathogenic Escherichia coli O127:H6 strain E2348/69.</title>
        <authorList>
            <person name="Iguchi A."/>
            <person name="Thomson N.R."/>
            <person name="Ogura Y."/>
            <person name="Saunders D."/>
            <person name="Ooka T."/>
            <person name="Henderson I.R."/>
            <person name="Harris D."/>
            <person name="Asadulghani M."/>
            <person name="Kurokawa K."/>
            <person name="Dean P."/>
            <person name="Kenny B."/>
            <person name="Quail M.A."/>
            <person name="Thurston S."/>
            <person name="Dougan G."/>
            <person name="Hayashi T."/>
            <person name="Parkhill J."/>
            <person name="Frankel G."/>
        </authorList>
    </citation>
    <scope>NUCLEOTIDE SEQUENCE [LARGE SCALE GENOMIC DNA]</scope>
    <source>
        <strain>E2348/69 / EPEC</strain>
    </source>
</reference>
<feature type="chain" id="PRO_1000146453" description="Small ribosomal subunit protein uS9">
    <location>
        <begin position="1"/>
        <end position="130"/>
    </location>
</feature>